<keyword id="KW-1185">Reference proteome</keyword>
<reference key="1">
    <citation type="journal article" date="2002" name="Proc. Natl. Acad. Sci. U.S.A.">
        <title>Genome sequence of Streptococcus mutans UA159, a cariogenic dental pathogen.</title>
        <authorList>
            <person name="Ajdic D.J."/>
            <person name="McShan W.M."/>
            <person name="McLaughlin R.E."/>
            <person name="Savic G."/>
            <person name="Chang J."/>
            <person name="Carson M.B."/>
            <person name="Primeaux C."/>
            <person name="Tian R."/>
            <person name="Kenton S."/>
            <person name="Jia H.G."/>
            <person name="Lin S.P."/>
            <person name="Qian Y."/>
            <person name="Li S."/>
            <person name="Zhu H."/>
            <person name="Najar F.Z."/>
            <person name="Lai H."/>
            <person name="White J."/>
            <person name="Roe B.A."/>
            <person name="Ferretti J.J."/>
        </authorList>
    </citation>
    <scope>NUCLEOTIDE SEQUENCE [LARGE SCALE GENOMIC DNA]</scope>
    <source>
        <strain>ATCC 700610 / UA159</strain>
    </source>
</reference>
<reference key="2">
    <citation type="journal article" date="1992" name="Infect. Immun.">
        <title>Isolation, characterization, and nucleotide sequence of the Streptococcus mutans mannitol-phosphate dehydrogenase gene and the mannitol-specific factor III gene of the phosphoenolpyruvate phosphotransferase system.</title>
        <authorList>
            <person name="Honeyman A.L."/>
            <person name="Curtiss R. III"/>
        </authorList>
    </citation>
    <scope>NUCLEOTIDE SEQUENCE [GENOMIC DNA] OF 1-33</scope>
    <source>
        <strain>ATCC 700611 / UA130 / Serotype c</strain>
    </source>
</reference>
<evidence type="ECO:0000303" key="1">
    <source>
    </source>
</evidence>
<evidence type="ECO:0000305" key="2"/>
<sequence length="110" mass="12197">MSLPNCPKCQSEYVYEDGILLVCPECAYEWNPAEVEKEEGLVVIDANGKQLADGDTVTLIKDLKVKGAPKDLKQGTRVKNIRLVEGDHNIDCKIDGFGAMKLKSEFVKKL</sequence>
<accession>Q02419</accession>
<feature type="chain" id="PRO_0000058389" description="Protein YjdM">
    <location>
        <begin position="1"/>
        <end position="110"/>
    </location>
</feature>
<protein>
    <recommendedName>
        <fullName>Protein YjdM</fullName>
    </recommendedName>
</protein>
<organism>
    <name type="scientific">Streptococcus mutans serotype c (strain ATCC 700610 / UA159)</name>
    <dbReference type="NCBI Taxonomy" id="210007"/>
    <lineage>
        <taxon>Bacteria</taxon>
        <taxon>Bacillati</taxon>
        <taxon>Bacillota</taxon>
        <taxon>Bacilli</taxon>
        <taxon>Lactobacillales</taxon>
        <taxon>Streptococcaceae</taxon>
        <taxon>Streptococcus</taxon>
    </lineage>
</organism>
<dbReference type="EMBL" id="AE014133">
    <property type="protein sequence ID" value="AAN58871.1"/>
    <property type="molecule type" value="Genomic_DNA"/>
</dbReference>
<dbReference type="EMBL" id="AF210133">
    <property type="protein sequence ID" value="AAA26943.1"/>
    <property type="molecule type" value="Genomic_DNA"/>
</dbReference>
<dbReference type="PIR" id="D44798">
    <property type="entry name" value="D44798"/>
</dbReference>
<dbReference type="RefSeq" id="NP_721565.1">
    <property type="nucleotide sequence ID" value="NC_004350.2"/>
</dbReference>
<dbReference type="RefSeq" id="WP_002262169.1">
    <property type="nucleotide sequence ID" value="NC_004350.2"/>
</dbReference>
<dbReference type="SMR" id="Q02419"/>
<dbReference type="STRING" id="210007.SMU_1180"/>
<dbReference type="KEGG" id="smu:SMU_1180"/>
<dbReference type="PATRIC" id="fig|210007.7.peg.1059"/>
<dbReference type="eggNOG" id="COG2824">
    <property type="taxonomic scope" value="Bacteria"/>
</dbReference>
<dbReference type="HOGENOM" id="CLU_134486_0_1_9"/>
<dbReference type="OrthoDB" id="9810131at2"/>
<dbReference type="PhylomeDB" id="Q02419"/>
<dbReference type="Proteomes" id="UP000002512">
    <property type="component" value="Chromosome"/>
</dbReference>
<dbReference type="FunFam" id="2.20.25.10:FF:000003">
    <property type="entry name" value="Alkylphosphonate utilization protein PhnA"/>
    <property type="match status" value="1"/>
</dbReference>
<dbReference type="FunFam" id="2.30.30.40:FF:000013">
    <property type="entry name" value="Alkylphosphonate utilization protein PhnA"/>
    <property type="match status" value="1"/>
</dbReference>
<dbReference type="Gene3D" id="2.20.25.10">
    <property type="match status" value="1"/>
</dbReference>
<dbReference type="Gene3D" id="2.30.30.40">
    <property type="entry name" value="SH3 Domains"/>
    <property type="match status" value="1"/>
</dbReference>
<dbReference type="InterPro" id="IPR004624">
    <property type="entry name" value="YjdM"/>
</dbReference>
<dbReference type="InterPro" id="IPR013988">
    <property type="entry name" value="YjdM_C"/>
</dbReference>
<dbReference type="InterPro" id="IPR013987">
    <property type="entry name" value="YjdM_N"/>
</dbReference>
<dbReference type="NCBIfam" id="TIGR00686">
    <property type="entry name" value="phnA"/>
    <property type="match status" value="1"/>
</dbReference>
<dbReference type="PANTHER" id="PTHR30305:SF3">
    <property type="entry name" value="PROTEIN YJDM"/>
    <property type="match status" value="1"/>
</dbReference>
<dbReference type="PANTHER" id="PTHR30305">
    <property type="entry name" value="PROTEIN YJDM-RELATED"/>
    <property type="match status" value="1"/>
</dbReference>
<dbReference type="Pfam" id="PF03831">
    <property type="entry name" value="YjdM"/>
    <property type="match status" value="1"/>
</dbReference>
<dbReference type="Pfam" id="PF08274">
    <property type="entry name" value="Zn_Ribbon_YjdM"/>
    <property type="match status" value="1"/>
</dbReference>
<dbReference type="SUPFAM" id="SSF82057">
    <property type="entry name" value="Prokaryotic SH3-related domain"/>
    <property type="match status" value="1"/>
</dbReference>
<dbReference type="SUPFAM" id="SSF57783">
    <property type="entry name" value="Zinc beta-ribbon"/>
    <property type="match status" value="1"/>
</dbReference>
<comment type="similarity">
    <text evidence="2">Belongs to the YjdM family.</text>
</comment>
<proteinExistence type="inferred from homology"/>
<name>YJDM_STRMU</name>
<gene>
    <name type="primary">yjdM</name>
    <name evidence="1" type="synonym">phnA</name>
    <name type="ordered locus">SMU_1180</name>
</gene>